<proteinExistence type="inferred from homology"/>
<organism>
    <name type="scientific">Thermotoga petrophila (strain ATCC BAA-488 / DSM 13995 / JCM 10881 / RKU-1)</name>
    <dbReference type="NCBI Taxonomy" id="390874"/>
    <lineage>
        <taxon>Bacteria</taxon>
        <taxon>Thermotogati</taxon>
        <taxon>Thermotogota</taxon>
        <taxon>Thermotogae</taxon>
        <taxon>Thermotogales</taxon>
        <taxon>Thermotogaceae</taxon>
        <taxon>Thermotoga</taxon>
    </lineage>
</organism>
<evidence type="ECO:0000255" key="1">
    <source>
        <dbReference type="HAMAP-Rule" id="MF_01208"/>
    </source>
</evidence>
<name>PYRE_THEP1</name>
<feature type="chain" id="PRO_1000066320" description="Orotate phosphoribosyltransferase">
    <location>
        <begin position="1"/>
        <end position="187"/>
    </location>
</feature>
<feature type="binding site" evidence="1">
    <location>
        <begin position="110"/>
        <end position="118"/>
    </location>
    <ligand>
        <name>5-phospho-alpha-D-ribose 1-diphosphate</name>
        <dbReference type="ChEBI" id="CHEBI:58017"/>
    </ligand>
</feature>
<feature type="binding site" evidence="1">
    <location>
        <position position="114"/>
    </location>
    <ligand>
        <name>orotate</name>
        <dbReference type="ChEBI" id="CHEBI:30839"/>
    </ligand>
</feature>
<feature type="binding site" evidence="1">
    <location>
        <position position="142"/>
    </location>
    <ligand>
        <name>orotate</name>
        <dbReference type="ChEBI" id="CHEBI:30839"/>
    </ligand>
</feature>
<sequence>MIKEILEKTGALMEGHFILSSGKHSSRYVQCARLFEFPEYGDIVGEELAKLLRKYDVETVVGPAMGGVILSYVVARYLKARSLFAERENGVMKLRRGFFVRPGEKAAVVEDVVTTGGSVKEVIELLKEYGANVVCVGSIIDRSGGKVDFGVPFESLLKLDLPVYDPEDCPLCKQGIPAEKPGSRGLK</sequence>
<comment type="function">
    <text evidence="1">Catalyzes the transfer of a ribosyl phosphate group from 5-phosphoribose 1-diphosphate to orotate, leading to the formation of orotidine monophosphate (OMP).</text>
</comment>
<comment type="catalytic activity">
    <reaction evidence="1">
        <text>orotidine 5'-phosphate + diphosphate = orotate + 5-phospho-alpha-D-ribose 1-diphosphate</text>
        <dbReference type="Rhea" id="RHEA:10380"/>
        <dbReference type="ChEBI" id="CHEBI:30839"/>
        <dbReference type="ChEBI" id="CHEBI:33019"/>
        <dbReference type="ChEBI" id="CHEBI:57538"/>
        <dbReference type="ChEBI" id="CHEBI:58017"/>
        <dbReference type="EC" id="2.4.2.10"/>
    </reaction>
</comment>
<comment type="cofactor">
    <cofactor evidence="1">
        <name>Mg(2+)</name>
        <dbReference type="ChEBI" id="CHEBI:18420"/>
    </cofactor>
</comment>
<comment type="pathway">
    <text evidence="1">Pyrimidine metabolism; UMP biosynthesis via de novo pathway; UMP from orotate: step 1/2.</text>
</comment>
<comment type="subunit">
    <text evidence="1">Homodimer.</text>
</comment>
<comment type="similarity">
    <text evidence="1">Belongs to the purine/pyrimidine phosphoribosyltransferase family. PyrE subfamily.</text>
</comment>
<keyword id="KW-0328">Glycosyltransferase</keyword>
<keyword id="KW-0460">Magnesium</keyword>
<keyword id="KW-0665">Pyrimidine biosynthesis</keyword>
<keyword id="KW-0808">Transferase</keyword>
<dbReference type="EC" id="2.4.2.10" evidence="1"/>
<dbReference type="EMBL" id="CP000702">
    <property type="protein sequence ID" value="ABQ46609.1"/>
    <property type="molecule type" value="Genomic_DNA"/>
</dbReference>
<dbReference type="RefSeq" id="WP_011943204.1">
    <property type="nucleotide sequence ID" value="NC_009486.1"/>
</dbReference>
<dbReference type="SMR" id="A5IK86"/>
<dbReference type="STRING" id="390874.Tpet_0588"/>
<dbReference type="KEGG" id="tpt:Tpet_0588"/>
<dbReference type="eggNOG" id="COG0461">
    <property type="taxonomic scope" value="Bacteria"/>
</dbReference>
<dbReference type="HOGENOM" id="CLU_074878_3_0_0"/>
<dbReference type="UniPathway" id="UPA00070">
    <property type="reaction ID" value="UER00119"/>
</dbReference>
<dbReference type="Proteomes" id="UP000006558">
    <property type="component" value="Chromosome"/>
</dbReference>
<dbReference type="GO" id="GO:0000287">
    <property type="term" value="F:magnesium ion binding"/>
    <property type="evidence" value="ECO:0007669"/>
    <property type="project" value="UniProtKB-UniRule"/>
</dbReference>
<dbReference type="GO" id="GO:0004588">
    <property type="term" value="F:orotate phosphoribosyltransferase activity"/>
    <property type="evidence" value="ECO:0007669"/>
    <property type="project" value="UniProtKB-UniRule"/>
</dbReference>
<dbReference type="GO" id="GO:0044205">
    <property type="term" value="P:'de novo' UMP biosynthetic process"/>
    <property type="evidence" value="ECO:0007669"/>
    <property type="project" value="UniProtKB-UniRule"/>
</dbReference>
<dbReference type="GO" id="GO:0019856">
    <property type="term" value="P:pyrimidine nucleobase biosynthetic process"/>
    <property type="evidence" value="ECO:0007669"/>
    <property type="project" value="InterPro"/>
</dbReference>
<dbReference type="CDD" id="cd06223">
    <property type="entry name" value="PRTases_typeI"/>
    <property type="match status" value="1"/>
</dbReference>
<dbReference type="Gene3D" id="3.40.50.2020">
    <property type="match status" value="1"/>
</dbReference>
<dbReference type="HAMAP" id="MF_01208">
    <property type="entry name" value="PyrE"/>
    <property type="match status" value="1"/>
</dbReference>
<dbReference type="InterPro" id="IPR023031">
    <property type="entry name" value="OPRT"/>
</dbReference>
<dbReference type="InterPro" id="IPR006273">
    <property type="entry name" value="Orotate_PRibTrfase_bac"/>
</dbReference>
<dbReference type="InterPro" id="IPR000836">
    <property type="entry name" value="PRibTrfase_dom"/>
</dbReference>
<dbReference type="InterPro" id="IPR029057">
    <property type="entry name" value="PRTase-like"/>
</dbReference>
<dbReference type="NCBIfam" id="TIGR01367">
    <property type="entry name" value="pyrE_Therm"/>
    <property type="match status" value="1"/>
</dbReference>
<dbReference type="PANTHER" id="PTHR19278">
    <property type="entry name" value="OROTATE PHOSPHORIBOSYLTRANSFERASE"/>
    <property type="match status" value="1"/>
</dbReference>
<dbReference type="PANTHER" id="PTHR19278:SF9">
    <property type="entry name" value="URIDINE 5'-MONOPHOSPHATE SYNTHASE"/>
    <property type="match status" value="1"/>
</dbReference>
<dbReference type="Pfam" id="PF00156">
    <property type="entry name" value="Pribosyltran"/>
    <property type="match status" value="1"/>
</dbReference>
<dbReference type="SUPFAM" id="SSF53271">
    <property type="entry name" value="PRTase-like"/>
    <property type="match status" value="1"/>
</dbReference>
<gene>
    <name evidence="1" type="primary">pyrE</name>
    <name type="ordered locus">Tpet_0588</name>
</gene>
<reference key="1">
    <citation type="submission" date="2007-05" db="EMBL/GenBank/DDBJ databases">
        <title>Complete sequence of Thermotoga petrophila RKU-1.</title>
        <authorList>
            <consortium name="US DOE Joint Genome Institute"/>
            <person name="Copeland A."/>
            <person name="Lucas S."/>
            <person name="Lapidus A."/>
            <person name="Barry K."/>
            <person name="Glavina del Rio T."/>
            <person name="Dalin E."/>
            <person name="Tice H."/>
            <person name="Pitluck S."/>
            <person name="Sims D."/>
            <person name="Brettin T."/>
            <person name="Bruce D."/>
            <person name="Detter J.C."/>
            <person name="Han C."/>
            <person name="Tapia R."/>
            <person name="Schmutz J."/>
            <person name="Larimer F."/>
            <person name="Land M."/>
            <person name="Hauser L."/>
            <person name="Kyrpides N."/>
            <person name="Mikhailova N."/>
            <person name="Nelson K."/>
            <person name="Gogarten J.P."/>
            <person name="Noll K."/>
            <person name="Richardson P."/>
        </authorList>
    </citation>
    <scope>NUCLEOTIDE SEQUENCE [LARGE SCALE GENOMIC DNA]</scope>
    <source>
        <strain>ATCC BAA-488 / DSM 13995 / JCM 10881 / RKU-1</strain>
    </source>
</reference>
<protein>
    <recommendedName>
        <fullName evidence="1">Orotate phosphoribosyltransferase</fullName>
        <shortName evidence="1">OPRT</shortName>
        <shortName evidence="1">OPRTase</shortName>
        <ecNumber evidence="1">2.4.2.10</ecNumber>
    </recommendedName>
</protein>
<accession>A5IK86</accession>